<keyword id="KW-0150">Chloroplast</keyword>
<keyword id="KW-0934">Plastid</keyword>
<keyword id="KW-0687">Ribonucleoprotein</keyword>
<keyword id="KW-0689">Ribosomal protein</keyword>
<keyword id="KW-0694">RNA-binding</keyword>
<keyword id="KW-0699">rRNA-binding</keyword>
<name>RR7_MESVI</name>
<protein>
    <recommendedName>
        <fullName evidence="2">Small ribosomal subunit protein uS7c</fullName>
    </recommendedName>
    <alternativeName>
        <fullName>30S ribosomal protein S7, chloroplastic</fullName>
    </alternativeName>
</protein>
<sequence length="156" mass="17859">MSRRSTPKKRIIDSDPIYRSRLVTMLISHILKEGKKSLAQKIFYQAMKNIEEKTEKDPLKVLQQAVLNATPLVEVKARRLGGSTYQVPREVKAERGTALALRWLLSSARQRPGRNMVAKLTNEIVDAANETGNAIRKREETHRMAEANKAFSHYRF</sequence>
<feature type="chain" id="PRO_0000124474" description="Small ribosomal subunit protein uS7c">
    <location>
        <begin position="1"/>
        <end position="156"/>
    </location>
</feature>
<geneLocation type="chloroplast"/>
<reference key="1">
    <citation type="journal article" date="2000" name="Nature">
        <title>Ancestral chloroplast genome in Mesostigma viride reveals an early branch of green plant evolution.</title>
        <authorList>
            <person name="Lemieux C."/>
            <person name="Otis C."/>
            <person name="Turmel M."/>
        </authorList>
    </citation>
    <scope>NUCLEOTIDE SEQUENCE [LARGE SCALE GENOMIC DNA]</scope>
    <source>
        <strain>NIES-296 / KY-14 / CCMP 2046</strain>
    </source>
</reference>
<comment type="function">
    <text evidence="1">One of the primary rRNA binding proteins, it binds directly to 16S rRNA where it nucleates assembly of the head domain of the 30S subunit.</text>
</comment>
<comment type="subunit">
    <text>Part of the 30S ribosomal subunit.</text>
</comment>
<comment type="subcellular location">
    <subcellularLocation>
        <location>Plastid</location>
        <location>Chloroplast</location>
    </subcellularLocation>
</comment>
<comment type="similarity">
    <text evidence="2">Belongs to the universal ribosomal protein uS7 family.</text>
</comment>
<accession>Q9MUP1</accession>
<gene>
    <name type="primary">rps7</name>
</gene>
<evidence type="ECO:0000250" key="1"/>
<evidence type="ECO:0000305" key="2"/>
<organism>
    <name type="scientific">Mesostigma viride</name>
    <name type="common">Green alga</name>
    <dbReference type="NCBI Taxonomy" id="41882"/>
    <lineage>
        <taxon>Eukaryota</taxon>
        <taxon>Viridiplantae</taxon>
        <taxon>Streptophyta</taxon>
        <taxon>Mesostigmatophyceae</taxon>
        <taxon>Mesostigmatales</taxon>
        <taxon>Mesostigmataceae</taxon>
        <taxon>Mesostigma</taxon>
    </lineage>
</organism>
<proteinExistence type="inferred from homology"/>
<dbReference type="EMBL" id="AF166114">
    <property type="protein sequence ID" value="AAF43859.1"/>
    <property type="molecule type" value="Genomic_DNA"/>
</dbReference>
<dbReference type="RefSeq" id="NP_038419.1">
    <property type="nucleotide sequence ID" value="NC_002186.1"/>
</dbReference>
<dbReference type="SMR" id="Q9MUP1"/>
<dbReference type="GeneID" id="800949"/>
<dbReference type="GO" id="GO:0009507">
    <property type="term" value="C:chloroplast"/>
    <property type="evidence" value="ECO:0007669"/>
    <property type="project" value="UniProtKB-SubCell"/>
</dbReference>
<dbReference type="GO" id="GO:0015935">
    <property type="term" value="C:small ribosomal subunit"/>
    <property type="evidence" value="ECO:0007669"/>
    <property type="project" value="InterPro"/>
</dbReference>
<dbReference type="GO" id="GO:0019843">
    <property type="term" value="F:rRNA binding"/>
    <property type="evidence" value="ECO:0007669"/>
    <property type="project" value="UniProtKB-UniRule"/>
</dbReference>
<dbReference type="GO" id="GO:0003735">
    <property type="term" value="F:structural constituent of ribosome"/>
    <property type="evidence" value="ECO:0007669"/>
    <property type="project" value="InterPro"/>
</dbReference>
<dbReference type="GO" id="GO:0006412">
    <property type="term" value="P:translation"/>
    <property type="evidence" value="ECO:0007669"/>
    <property type="project" value="UniProtKB-UniRule"/>
</dbReference>
<dbReference type="CDD" id="cd14871">
    <property type="entry name" value="uS7_Chloroplast"/>
    <property type="match status" value="1"/>
</dbReference>
<dbReference type="FunFam" id="1.10.455.10:FF:000001">
    <property type="entry name" value="30S ribosomal protein S7"/>
    <property type="match status" value="1"/>
</dbReference>
<dbReference type="Gene3D" id="1.10.455.10">
    <property type="entry name" value="Ribosomal protein S7 domain"/>
    <property type="match status" value="1"/>
</dbReference>
<dbReference type="HAMAP" id="MF_00480_B">
    <property type="entry name" value="Ribosomal_uS7_B"/>
    <property type="match status" value="1"/>
</dbReference>
<dbReference type="InterPro" id="IPR000235">
    <property type="entry name" value="Ribosomal_uS7"/>
</dbReference>
<dbReference type="InterPro" id="IPR005717">
    <property type="entry name" value="Ribosomal_uS7_bac/org-type"/>
</dbReference>
<dbReference type="InterPro" id="IPR020606">
    <property type="entry name" value="Ribosomal_uS7_CS"/>
</dbReference>
<dbReference type="InterPro" id="IPR023798">
    <property type="entry name" value="Ribosomal_uS7_dom"/>
</dbReference>
<dbReference type="InterPro" id="IPR036823">
    <property type="entry name" value="Ribosomal_uS7_dom_sf"/>
</dbReference>
<dbReference type="NCBIfam" id="TIGR01029">
    <property type="entry name" value="rpsG_bact"/>
    <property type="match status" value="1"/>
</dbReference>
<dbReference type="PANTHER" id="PTHR11205">
    <property type="entry name" value="RIBOSOMAL PROTEIN S7"/>
    <property type="match status" value="1"/>
</dbReference>
<dbReference type="Pfam" id="PF00177">
    <property type="entry name" value="Ribosomal_S7"/>
    <property type="match status" value="1"/>
</dbReference>
<dbReference type="PIRSF" id="PIRSF002122">
    <property type="entry name" value="RPS7p_RPS7a_RPS5e_RPS7o"/>
    <property type="match status" value="1"/>
</dbReference>
<dbReference type="SUPFAM" id="SSF47973">
    <property type="entry name" value="Ribosomal protein S7"/>
    <property type="match status" value="1"/>
</dbReference>
<dbReference type="PROSITE" id="PS00052">
    <property type="entry name" value="RIBOSOMAL_S7"/>
    <property type="match status" value="1"/>
</dbReference>